<gene>
    <name type="primary">RPL39</name>
</gene>
<name>RL39_CANAX</name>
<reference key="1">
    <citation type="submission" date="2001-03" db="EMBL/GenBank/DDBJ databases">
        <title>Evolution of ribosomal protein S14 gene structure: Candida albicans, Schizosaccharomyces pombe, and selected ascomycetous fungi.</title>
        <authorList>
            <person name="Burke T.J."/>
            <person name="Rhoads D.D."/>
        </authorList>
    </citation>
    <scope>NUCLEOTIDE SEQUENCE [GENOMIC DNA]</scope>
    <source>
        <strain>B207</strain>
    </source>
</reference>
<keyword id="KW-0002">3D-structure</keyword>
<keyword id="KW-0687">Ribonucleoprotein</keyword>
<keyword id="KW-0689">Ribosomal protein</keyword>
<sequence>MPSQKSFRTKQKLAKAQKQNRPLPQWIRLRTDNKIRYNAKRRHWRRTKLGI</sequence>
<accession>Q96W55</accession>
<evidence type="ECO:0000250" key="1">
    <source>
        <dbReference type="UniProtKB" id="P04650"/>
    </source>
</evidence>
<evidence type="ECO:0000256" key="2">
    <source>
        <dbReference type="SAM" id="MobiDB-lite"/>
    </source>
</evidence>
<evidence type="ECO:0000305" key="3"/>
<dbReference type="EMBL" id="AF365406">
    <property type="protein sequence ID" value="AAK60140.1"/>
    <property type="molecule type" value="Genomic_DNA"/>
</dbReference>
<dbReference type="PDB" id="8C3A">
    <property type="method" value="X-ray"/>
    <property type="resolution" value="3.00 A"/>
    <property type="chains" value="AM/CG=1-51"/>
</dbReference>
<dbReference type="PDB" id="8CQ7">
    <property type="method" value="X-ray"/>
    <property type="resolution" value="3.20 A"/>
    <property type="chains" value="AM/CG=1-51"/>
</dbReference>
<dbReference type="PDB" id="8CQW">
    <property type="method" value="X-ray"/>
    <property type="resolution" value="3.05 A"/>
    <property type="chains" value="AM/CG=1-51"/>
</dbReference>
<dbReference type="PDB" id="8CRE">
    <property type="method" value="X-ray"/>
    <property type="resolution" value="3.00 A"/>
    <property type="chains" value="AM/CG=1-51"/>
</dbReference>
<dbReference type="PDB" id="8OEQ">
    <property type="method" value="X-ray"/>
    <property type="resolution" value="3.30 A"/>
    <property type="chains" value="AM/CG=1-51"/>
</dbReference>
<dbReference type="PDB" id="8OGJ">
    <property type="method" value="EM"/>
    <property type="resolution" value="3.10 A"/>
    <property type="chains" value="AM=1-51"/>
</dbReference>
<dbReference type="PDB" id="8OH6">
    <property type="method" value="X-ray"/>
    <property type="resolution" value="3.35 A"/>
    <property type="chains" value="AM/CG=1-51"/>
</dbReference>
<dbReference type="PDB" id="8OI5">
    <property type="method" value="X-ray"/>
    <property type="resolution" value="2.90 A"/>
    <property type="chains" value="AM/CG=1-51"/>
</dbReference>
<dbReference type="PDB" id="8OJ3">
    <property type="method" value="X-ray"/>
    <property type="resolution" value="3.50 A"/>
    <property type="chains" value="AM/CG=1-51"/>
</dbReference>
<dbReference type="PDB" id="8Q5I">
    <property type="method" value="EM"/>
    <property type="resolution" value="2.45 A"/>
    <property type="chains" value="AM=1-51"/>
</dbReference>
<dbReference type="PDBsum" id="8C3A"/>
<dbReference type="PDBsum" id="8CQ7"/>
<dbReference type="PDBsum" id="8CQW"/>
<dbReference type="PDBsum" id="8CRE"/>
<dbReference type="PDBsum" id="8OEQ"/>
<dbReference type="PDBsum" id="8OGJ"/>
<dbReference type="PDBsum" id="8OH6"/>
<dbReference type="PDBsum" id="8OI5"/>
<dbReference type="PDBsum" id="8OJ3"/>
<dbReference type="PDBsum" id="8Q5I"/>
<dbReference type="EMDB" id="EMD-16874"/>
<dbReference type="SMR" id="Q96W55"/>
<dbReference type="EnsemblFungi" id="C1_06470W_A-T">
    <property type="protein sequence ID" value="C1_06470W_A-T-p1"/>
    <property type="gene ID" value="C1_06470W_A"/>
</dbReference>
<dbReference type="VEuPathDB" id="FungiDB:C1_06470W_A"/>
<dbReference type="VEuPathDB" id="FungiDB:CAWG_00764"/>
<dbReference type="PhylomeDB" id="Q96W55"/>
<dbReference type="GO" id="GO:0022625">
    <property type="term" value="C:cytosolic large ribosomal subunit"/>
    <property type="evidence" value="ECO:0007669"/>
    <property type="project" value="TreeGrafter"/>
</dbReference>
<dbReference type="GO" id="GO:0030684">
    <property type="term" value="C:preribosome"/>
    <property type="evidence" value="ECO:0007669"/>
    <property type="project" value="EnsemblFungi"/>
</dbReference>
<dbReference type="GO" id="GO:0003735">
    <property type="term" value="F:structural constituent of ribosome"/>
    <property type="evidence" value="ECO:0007669"/>
    <property type="project" value="InterPro"/>
</dbReference>
<dbReference type="GO" id="GO:0006412">
    <property type="term" value="P:translation"/>
    <property type="evidence" value="ECO:0007669"/>
    <property type="project" value="InterPro"/>
</dbReference>
<dbReference type="FunFam" id="1.10.1620.10:FF:000001">
    <property type="entry name" value="60S ribosomal protein-like L39"/>
    <property type="match status" value="1"/>
</dbReference>
<dbReference type="Gene3D" id="1.10.1620.10">
    <property type="entry name" value="Ribosomal protein L39e"/>
    <property type="match status" value="1"/>
</dbReference>
<dbReference type="HAMAP" id="MF_00629">
    <property type="entry name" value="Ribosomal_eL39"/>
    <property type="match status" value="1"/>
</dbReference>
<dbReference type="InterPro" id="IPR000077">
    <property type="entry name" value="Ribosomal_eL39"/>
</dbReference>
<dbReference type="InterPro" id="IPR020083">
    <property type="entry name" value="Ribosomal_eL39_CS"/>
</dbReference>
<dbReference type="InterPro" id="IPR023626">
    <property type="entry name" value="Ribosomal_eL39_dom_sf"/>
</dbReference>
<dbReference type="PANTHER" id="PTHR19970:SF0">
    <property type="entry name" value="LARGE RIBOSOMAL SUBUNIT PROTEIN EL39"/>
    <property type="match status" value="1"/>
</dbReference>
<dbReference type="PANTHER" id="PTHR19970">
    <property type="entry name" value="RIBOSOMAL PROTEIN L39E"/>
    <property type="match status" value="1"/>
</dbReference>
<dbReference type="Pfam" id="PF00832">
    <property type="entry name" value="Ribosomal_L39"/>
    <property type="match status" value="1"/>
</dbReference>
<dbReference type="SUPFAM" id="SSF48662">
    <property type="entry name" value="Ribosomal protein L39e"/>
    <property type="match status" value="1"/>
</dbReference>
<dbReference type="PROSITE" id="PS00051">
    <property type="entry name" value="RIBOSOMAL_L39E"/>
    <property type="match status" value="1"/>
</dbReference>
<feature type="chain" id="PRO_0000127039" description="Large ribosomal subunit protein eL39">
    <location>
        <begin position="1"/>
        <end position="51"/>
    </location>
</feature>
<feature type="region of interest" description="Disordered" evidence="2">
    <location>
        <begin position="1"/>
        <end position="23"/>
    </location>
</feature>
<comment type="subunit">
    <text evidence="1">Interacts with YIH1.</text>
</comment>
<comment type="similarity">
    <text evidence="3">Belongs to the eukaryotic ribosomal protein eL39 family.</text>
</comment>
<organism>
    <name type="scientific">Candida albicans</name>
    <name type="common">Yeast</name>
    <dbReference type="NCBI Taxonomy" id="5476"/>
    <lineage>
        <taxon>Eukaryota</taxon>
        <taxon>Fungi</taxon>
        <taxon>Dikarya</taxon>
        <taxon>Ascomycota</taxon>
        <taxon>Saccharomycotina</taxon>
        <taxon>Pichiomycetes</taxon>
        <taxon>Debaryomycetaceae</taxon>
        <taxon>Candida/Lodderomyces clade</taxon>
        <taxon>Candida</taxon>
    </lineage>
</organism>
<proteinExistence type="evidence at protein level"/>
<protein>
    <recommendedName>
        <fullName evidence="3">Large ribosomal subunit protein eL39</fullName>
    </recommendedName>
    <alternativeName>
        <fullName>60S ribosomal protein L39</fullName>
    </alternativeName>
    <alternativeName>
        <fullName>L46</fullName>
    </alternativeName>
</protein>